<gene>
    <name type="primary">Defa-rs10</name>
    <name type="synonym">Defcr-rs10</name>
</gene>
<feature type="signal peptide" evidence="2">
    <location>
        <begin position="1"/>
        <end position="19"/>
    </location>
</feature>
<feature type="propeptide" id="PRO_0000006855" evidence="2">
    <location>
        <begin position="20"/>
        <end position="65"/>
    </location>
</feature>
<feature type="peptide" id="PRO_0000006856" description="Alpha-defensin-related sequence 10">
    <location>
        <begin position="66"/>
        <end position="91"/>
    </location>
</feature>
<feature type="repeat" description="1">
    <location>
        <begin position="65"/>
        <end position="67"/>
    </location>
</feature>
<feature type="repeat" description="2">
    <location>
        <begin position="68"/>
        <end position="70"/>
    </location>
</feature>
<feature type="repeat" description="3">
    <location>
        <begin position="71"/>
        <end position="73"/>
    </location>
</feature>
<feature type="repeat" description="4">
    <location>
        <begin position="74"/>
        <end position="76"/>
    </location>
</feature>
<feature type="repeat" description="5">
    <location>
        <begin position="77"/>
        <end position="79"/>
    </location>
</feature>
<feature type="repeat" description="6">
    <location>
        <begin position="80"/>
        <end position="82"/>
    </location>
</feature>
<feature type="repeat" description="7">
    <location>
        <begin position="83"/>
        <end position="85"/>
    </location>
</feature>
<feature type="region of interest" description="Disordered" evidence="3">
    <location>
        <begin position="21"/>
        <end position="52"/>
    </location>
</feature>
<feature type="region of interest" description="7 X 3 AA tandem repeats of C-P-X">
    <location>
        <begin position="65"/>
        <end position="85"/>
    </location>
</feature>
<keyword id="KW-0929">Antimicrobial</keyword>
<keyword id="KW-0211">Defensin</keyword>
<keyword id="KW-1185">Reference proteome</keyword>
<keyword id="KW-0677">Repeat</keyword>
<keyword id="KW-0964">Secreted</keyword>
<keyword id="KW-0732">Signal</keyword>
<reference key="1">
    <citation type="journal article" date="1994" name="Genomics">
        <title>A family of defensin-like genes codes for diverse cysteine-rich peptides in mouse Paneth cells.</title>
        <authorList>
            <person name="Huttner K.M."/>
            <person name="Ouellette A.J."/>
        </authorList>
    </citation>
    <scope>NUCLEOTIDE SEQUENCE [GENOMIC DNA]</scope>
    <source>
        <strain>129/SvJ</strain>
        <tissue>Small intestine</tissue>
    </source>
</reference>
<reference key="2">
    <citation type="journal article" date="2004" name="Genome Res.">
        <title>The status, quality, and expansion of the NIH full-length cDNA project: the Mammalian Gene Collection (MGC).</title>
        <authorList>
            <consortium name="The MGC Project Team"/>
        </authorList>
    </citation>
    <scope>NUCLEOTIDE SEQUENCE [LARGE SCALE MRNA]</scope>
</reference>
<sequence length="91" mass="9777">MKKLVLLSAFVLLAFQVQADSIQNTDEETKTEEQPGEENQAMSVSFGDPEGSALQDAAVGMARPCPPCPSCPSCPWCPMCPRCPSCKCNPK</sequence>
<accession>Q64263</accession>
<accession>Q0VDL7</accession>
<name>DAR10_MOUSE</name>
<proteinExistence type="evidence at transcript level"/>
<evidence type="ECO:0000250" key="1"/>
<evidence type="ECO:0000255" key="2"/>
<evidence type="ECO:0000256" key="3">
    <source>
        <dbReference type="SAM" id="MobiDB-lite"/>
    </source>
</evidence>
<evidence type="ECO:0000305" key="4"/>
<protein>
    <recommendedName>
        <fullName>Alpha-defensin-related sequence 10</fullName>
    </recommendedName>
    <alternativeName>
        <fullName>CRS4C-4</fullName>
    </alternativeName>
    <alternativeName>
        <fullName>Cryptdin-related protein 4C-4</fullName>
    </alternativeName>
    <alternativeName>
        <fullName>Defensin-related cryptdin-related sequence 10</fullName>
    </alternativeName>
</protein>
<dbReference type="EMBL" id="S77616">
    <property type="protein sequence ID" value="AAB33827.1"/>
    <property type="molecule type" value="Genomic_DNA"/>
</dbReference>
<dbReference type="EMBL" id="S77750">
    <property type="protein sequence ID" value="AAB33827.1"/>
    <property type="status" value="JOINED"/>
    <property type="molecule type" value="Genomic_DNA"/>
</dbReference>
<dbReference type="EMBL" id="U12565">
    <property type="protein sequence ID" value="AAA20978.1"/>
    <property type="molecule type" value="Genomic_DNA"/>
</dbReference>
<dbReference type="EMBL" id="BC119615">
    <property type="protein sequence ID" value="AAI19616.1"/>
    <property type="molecule type" value="mRNA"/>
</dbReference>
<dbReference type="EMBL" id="BC119616">
    <property type="protein sequence ID" value="AAI19617.1"/>
    <property type="molecule type" value="mRNA"/>
</dbReference>
<dbReference type="RefSeq" id="NP_031871.1">
    <property type="nucleotide sequence ID" value="NM_007845.3"/>
</dbReference>
<dbReference type="SMR" id="Q64263"/>
<dbReference type="FunCoup" id="Q64263">
    <property type="interactions" value="32"/>
</dbReference>
<dbReference type="GeneID" id="13219"/>
<dbReference type="KEGG" id="mmu:13219"/>
<dbReference type="AGR" id="MGI:102516"/>
<dbReference type="CTD" id="13219"/>
<dbReference type="MGI" id="MGI:102516">
    <property type="gene designation" value="Defa-rs10"/>
</dbReference>
<dbReference type="InParanoid" id="Q64263"/>
<dbReference type="PhylomeDB" id="Q64263"/>
<dbReference type="PRO" id="PR:Q64263"/>
<dbReference type="Proteomes" id="UP000000589">
    <property type="component" value="Unplaced"/>
</dbReference>
<dbReference type="RNAct" id="Q64263">
    <property type="molecule type" value="protein"/>
</dbReference>
<dbReference type="GO" id="GO:0005615">
    <property type="term" value="C:extracellular space"/>
    <property type="evidence" value="ECO:0007669"/>
    <property type="project" value="InterPro"/>
</dbReference>
<dbReference type="GO" id="GO:0042742">
    <property type="term" value="P:defense response to bacterium"/>
    <property type="evidence" value="ECO:0007669"/>
    <property type="project" value="UniProtKB-ARBA"/>
</dbReference>
<dbReference type="InterPro" id="IPR016327">
    <property type="entry name" value="Alpha-defensin"/>
</dbReference>
<dbReference type="InterPro" id="IPR002366">
    <property type="entry name" value="Alpha-defensin_N"/>
</dbReference>
<dbReference type="PANTHER" id="PTHR11876">
    <property type="entry name" value="ALPHA-DEFENSIN 1"/>
    <property type="match status" value="1"/>
</dbReference>
<dbReference type="PANTHER" id="PTHR11876:SF2">
    <property type="entry name" value="ALPHA-DEFENSIN 1-RELATED"/>
    <property type="match status" value="1"/>
</dbReference>
<dbReference type="Pfam" id="PF00879">
    <property type="entry name" value="Defensin_propep"/>
    <property type="match status" value="1"/>
</dbReference>
<dbReference type="PIRSF" id="PIRSF001875">
    <property type="entry name" value="Alpha-defensin"/>
    <property type="match status" value="1"/>
</dbReference>
<dbReference type="SMART" id="SM01418">
    <property type="entry name" value="Defensin_propep"/>
    <property type="match status" value="1"/>
</dbReference>
<comment type="function">
    <text evidence="1">Apparent precursor of a secreted, cationic, proline- and cysteine-rich peptide that contains Cys-Pro-Xaa repeats. Unlike cryptdin, the proposed mature peptide region lacks the structural motif characteristic of defensins. It may have microbicidal activities (By similarity).</text>
</comment>
<comment type="subcellular location">
    <subcellularLocation>
        <location>Secreted</location>
    </subcellularLocation>
</comment>
<comment type="tissue specificity">
    <text>Paneth cells of the small bowel.</text>
</comment>
<comment type="similarity">
    <text evidence="4">Belongs to the alpha-defensin family.</text>
</comment>
<organism>
    <name type="scientific">Mus musculus</name>
    <name type="common">Mouse</name>
    <dbReference type="NCBI Taxonomy" id="10090"/>
    <lineage>
        <taxon>Eukaryota</taxon>
        <taxon>Metazoa</taxon>
        <taxon>Chordata</taxon>
        <taxon>Craniata</taxon>
        <taxon>Vertebrata</taxon>
        <taxon>Euteleostomi</taxon>
        <taxon>Mammalia</taxon>
        <taxon>Eutheria</taxon>
        <taxon>Euarchontoglires</taxon>
        <taxon>Glires</taxon>
        <taxon>Rodentia</taxon>
        <taxon>Myomorpha</taxon>
        <taxon>Muroidea</taxon>
        <taxon>Muridae</taxon>
        <taxon>Murinae</taxon>
        <taxon>Mus</taxon>
        <taxon>Mus</taxon>
    </lineage>
</organism>